<feature type="chain" id="PRO_0000446256" description="Kunitz-type serine protease inhibitor PPTI">
    <location>
        <begin position="1"/>
        <end position="68"/>
    </location>
</feature>
<feature type="domain" description="BPTI/Kunitz inhibitor" evidence="2">
    <location>
        <begin position="7"/>
        <end position="57"/>
    </location>
</feature>
<feature type="site" description="May be the major determinant of the binding affinity for potassium channels" evidence="9">
    <location>
        <position position="5"/>
    </location>
</feature>
<feature type="site" description="Reactive bond for trypsin" evidence="1 9">
    <location>
        <begin position="17"/>
        <end position="18"/>
    </location>
</feature>
<feature type="modified residue" description="Pyrrolidone carboxylic acid (Glu)" evidence="3">
    <location>
        <position position="1"/>
    </location>
</feature>
<feature type="disulfide bond" evidence="4 10">
    <location>
        <begin position="7"/>
        <end position="57"/>
    </location>
</feature>
<feature type="disulfide bond" evidence="4 10">
    <location>
        <begin position="16"/>
        <end position="40"/>
    </location>
</feature>
<feature type="disulfide bond" evidence="4 10">
    <location>
        <begin position="32"/>
        <end position="53"/>
    </location>
</feature>
<feature type="helix" evidence="11">
    <location>
        <begin position="5"/>
        <end position="8"/>
    </location>
</feature>
<feature type="strand" evidence="11">
    <location>
        <begin position="20"/>
        <end position="26"/>
    </location>
</feature>
<feature type="helix" evidence="11">
    <location>
        <begin position="27"/>
        <end position="29"/>
    </location>
</feature>
<feature type="strand" evidence="11">
    <location>
        <begin position="31"/>
        <end position="37"/>
    </location>
</feature>
<feature type="helix" evidence="11">
    <location>
        <begin position="50"/>
        <end position="57"/>
    </location>
</feature>
<comment type="function">
    <text evidence="3 9">Serine protease inhibitor that weakly inhibits trypsin (Ki=0.2 uM) (PubMed:30452896). May have potassium channel blocking activities (PubMed:30973886).</text>
</comment>
<comment type="subcellular location">
    <subcellularLocation>
        <location evidence="3">Secreted</location>
    </subcellularLocation>
</comment>
<comment type="tissue specificity">
    <text evidence="8">Expressed by the venom gland.</text>
</comment>
<comment type="mass spectrometry" mass="7642.5" method="Electrospray" evidence="3"/>
<comment type="similarity">
    <text evidence="7">Belongs to the venom Kunitz-type family.</text>
</comment>
<comment type="online information" name="Biological Magnetic Resonance Data Bank">
    <link uri="https://bmrb.io/data_library/summary/index.php?bmrbId=36197"/>
</comment>
<organism>
    <name type="scientific">Pseudocerastes persicus</name>
    <name type="common">Persian horned viper</name>
    <name type="synonym">False horned viper</name>
    <dbReference type="NCBI Taxonomy" id="47769"/>
    <lineage>
        <taxon>Eukaryota</taxon>
        <taxon>Metazoa</taxon>
        <taxon>Chordata</taxon>
        <taxon>Craniata</taxon>
        <taxon>Vertebrata</taxon>
        <taxon>Euteleostomi</taxon>
        <taxon>Lepidosauria</taxon>
        <taxon>Squamata</taxon>
        <taxon>Bifurcata</taxon>
        <taxon>Unidentata</taxon>
        <taxon>Episquamata</taxon>
        <taxon>Toxicofera</taxon>
        <taxon>Serpentes</taxon>
        <taxon>Colubroidea</taxon>
        <taxon>Viperidae</taxon>
        <taxon>Viperinae</taxon>
        <taxon>Pseudocerastes</taxon>
    </lineage>
</organism>
<accession>C0HLB2</accession>
<reference key="1">
    <citation type="journal article" date="2019" name="Arch. Biochem. Biophys.">
        <title>Characterization of a new member of kunitz-type protein family from the venom of Persian false-horned viper, Pseudocerastes persicus.</title>
        <authorList>
            <person name="Banijamali S.E."/>
            <person name="Amininasab M."/>
            <person name="Elmi M.M."/>
        </authorList>
    </citation>
    <scope>PROTEIN SEQUENCE</scope>
    <scope>FUNCTION</scope>
    <scope>SUBCELLULAR LOCATION</scope>
    <scope>MASS SPECTROMETRY</scope>
    <scope>PYROGLUTAMATE FORMATION AT GLU-1</scope>
</reference>
<reference key="2">
    <citation type="journal article" date="2019" name="PLoS ONE">
        <title>Structural characterization of PPTI, a kunitz-type protein from the venom of Pseudocerastes persicus.</title>
        <authorList>
            <person name="Banijamali S.E."/>
            <person name="Amininasab M."/>
            <person name="Zaeifi D."/>
        </authorList>
    </citation>
    <scope>STRUCTURE BY NMR</scope>
    <scope>3D-STRUCTURE MODELING IN COMPLEX WITH TRYPSIN OR WITH THE POTASSIUM CHANNEL KV1.1/KCNA1</scope>
    <scope>DISULFIDE BOND</scope>
    <scope>FUNCTION</scope>
</reference>
<sequence length="68" mass="7668">EDRPKFCYLPDDPGVCKAHIPRFYYNPASNKCKEFIYGGCGGNANNFETRAECRHTCVASRKGGPRRP</sequence>
<name>VKT_PSEPC</name>
<proteinExistence type="evidence at protein level"/>
<keyword id="KW-0002">3D-structure</keyword>
<keyword id="KW-0903">Direct protein sequencing</keyword>
<keyword id="KW-1015">Disulfide bond</keyword>
<keyword id="KW-0872">Ion channel impairing toxin</keyword>
<keyword id="KW-0632">Potassium channel impairing toxin</keyword>
<keyword id="KW-0646">Protease inhibitor</keyword>
<keyword id="KW-0873">Pyrrolidone carboxylic acid</keyword>
<keyword id="KW-0964">Secreted</keyword>
<keyword id="KW-0722">Serine protease inhibitor</keyword>
<keyword id="KW-0800">Toxin</keyword>
<keyword id="KW-1220">Voltage-gated potassium channel impairing toxin</keyword>
<dbReference type="PDB" id="6A5I">
    <property type="method" value="NMR"/>
    <property type="chains" value="A=1-68"/>
</dbReference>
<dbReference type="PDBsum" id="6A5I"/>
<dbReference type="SMR" id="C0HLB2"/>
<dbReference type="GO" id="GO:0005615">
    <property type="term" value="C:extracellular space"/>
    <property type="evidence" value="ECO:0007669"/>
    <property type="project" value="TreeGrafter"/>
</dbReference>
<dbReference type="GO" id="GO:0015459">
    <property type="term" value="F:potassium channel regulator activity"/>
    <property type="evidence" value="ECO:0007669"/>
    <property type="project" value="UniProtKB-KW"/>
</dbReference>
<dbReference type="GO" id="GO:0004867">
    <property type="term" value="F:serine-type endopeptidase inhibitor activity"/>
    <property type="evidence" value="ECO:0007669"/>
    <property type="project" value="UniProtKB-KW"/>
</dbReference>
<dbReference type="GO" id="GO:0090729">
    <property type="term" value="F:toxin activity"/>
    <property type="evidence" value="ECO:0007669"/>
    <property type="project" value="UniProtKB-KW"/>
</dbReference>
<dbReference type="CDD" id="cd22608">
    <property type="entry name" value="Kunitz_PPTI-like"/>
    <property type="match status" value="1"/>
</dbReference>
<dbReference type="FunFam" id="4.10.410.10:FF:000021">
    <property type="entry name" value="Serine protease inhibitor, putative"/>
    <property type="match status" value="1"/>
</dbReference>
<dbReference type="Gene3D" id="4.10.410.10">
    <property type="entry name" value="Pancreatic trypsin inhibitor Kunitz domain"/>
    <property type="match status" value="1"/>
</dbReference>
<dbReference type="InterPro" id="IPR002223">
    <property type="entry name" value="Kunitz_BPTI"/>
</dbReference>
<dbReference type="InterPro" id="IPR036880">
    <property type="entry name" value="Kunitz_BPTI_sf"/>
</dbReference>
<dbReference type="InterPro" id="IPR020901">
    <property type="entry name" value="Prtase_inh_Kunz-CS"/>
</dbReference>
<dbReference type="InterPro" id="IPR050098">
    <property type="entry name" value="TFPI/VKTCI-like"/>
</dbReference>
<dbReference type="PANTHER" id="PTHR10083:SF374">
    <property type="entry name" value="BPTI_KUNITZ INHIBITOR DOMAIN-CONTAINING PROTEIN"/>
    <property type="match status" value="1"/>
</dbReference>
<dbReference type="PANTHER" id="PTHR10083">
    <property type="entry name" value="KUNITZ-TYPE PROTEASE INHIBITOR-RELATED"/>
    <property type="match status" value="1"/>
</dbReference>
<dbReference type="Pfam" id="PF00014">
    <property type="entry name" value="Kunitz_BPTI"/>
    <property type="match status" value="1"/>
</dbReference>
<dbReference type="PRINTS" id="PR00759">
    <property type="entry name" value="BASICPTASE"/>
</dbReference>
<dbReference type="SMART" id="SM00131">
    <property type="entry name" value="KU"/>
    <property type="match status" value="1"/>
</dbReference>
<dbReference type="SUPFAM" id="SSF57362">
    <property type="entry name" value="BPTI-like"/>
    <property type="match status" value="1"/>
</dbReference>
<dbReference type="PROSITE" id="PS00280">
    <property type="entry name" value="BPTI_KUNITZ_1"/>
    <property type="match status" value="1"/>
</dbReference>
<dbReference type="PROSITE" id="PS50279">
    <property type="entry name" value="BPTI_KUNITZ_2"/>
    <property type="match status" value="1"/>
</dbReference>
<evidence type="ECO:0000250" key="1">
    <source>
        <dbReference type="UniProtKB" id="P31713"/>
    </source>
</evidence>
<evidence type="ECO:0000255" key="2">
    <source>
        <dbReference type="PROSITE-ProRule" id="PRU00031"/>
    </source>
</evidence>
<evidence type="ECO:0000269" key="3">
    <source>
    </source>
</evidence>
<evidence type="ECO:0000269" key="4">
    <source>
    </source>
</evidence>
<evidence type="ECO:0000303" key="5">
    <source>
    </source>
</evidence>
<evidence type="ECO:0000303" key="6">
    <source>
    </source>
</evidence>
<evidence type="ECO:0000305" key="7"/>
<evidence type="ECO:0000305" key="8">
    <source>
    </source>
</evidence>
<evidence type="ECO:0000305" key="9">
    <source>
    </source>
</evidence>
<evidence type="ECO:0007744" key="10">
    <source>
        <dbReference type="PDB" id="6A5I"/>
    </source>
</evidence>
<evidence type="ECO:0007829" key="11">
    <source>
        <dbReference type="PDB" id="6A5I"/>
    </source>
</evidence>
<protein>
    <recommendedName>
        <fullName evidence="7">Kunitz-type serine protease inhibitor PPTI</fullName>
    </recommendedName>
    <alternativeName>
        <fullName evidence="5 6">Pseudocerastes persicus trypsin inhibitor</fullName>
        <shortName evidence="5 6">PPTI</shortName>
    </alternativeName>
</protein>